<protein>
    <recommendedName>
        <fullName>VapC ribonuclease Mb2780c</fullName>
        <shortName>RNase Mb2780c</shortName>
        <ecNumber evidence="1">3.1.-.-</ecNumber>
    </recommendedName>
    <alternativeName>
        <fullName>Toxin Mb2780c</fullName>
    </alternativeName>
</protein>
<feature type="chain" id="PRO_0000221204" description="VapC ribonuclease Mb2780c">
    <location>
        <begin position="1"/>
        <end position="131"/>
    </location>
</feature>
<feature type="domain" description="PINc" evidence="1">
    <location>
        <begin position="1"/>
        <end position="125"/>
    </location>
</feature>
<feature type="binding site" evidence="1">
    <location>
        <position position="4"/>
    </location>
    <ligand>
        <name>Mg(2+)</name>
        <dbReference type="ChEBI" id="CHEBI:18420"/>
    </ligand>
</feature>
<feature type="binding site" evidence="1">
    <location>
        <position position="100"/>
    </location>
    <ligand>
        <name>Mg(2+)</name>
        <dbReference type="ChEBI" id="CHEBI:18420"/>
    </ligand>
</feature>
<keyword id="KW-0378">Hydrolase</keyword>
<keyword id="KW-0460">Magnesium</keyword>
<keyword id="KW-0479">Metal-binding</keyword>
<keyword id="KW-0540">Nuclease</keyword>
<keyword id="KW-1185">Reference proteome</keyword>
<keyword id="KW-1277">Toxin-antitoxin system</keyword>
<dbReference type="EC" id="3.1.-.-" evidence="1"/>
<dbReference type="EMBL" id="LT708304">
    <property type="protein sequence ID" value="SIU01398.1"/>
    <property type="molecule type" value="Genomic_DNA"/>
</dbReference>
<dbReference type="RefSeq" id="NP_856426.1">
    <property type="nucleotide sequence ID" value="NC_002945.3"/>
</dbReference>
<dbReference type="RefSeq" id="WP_003414064.1">
    <property type="nucleotide sequence ID" value="NC_002945.4"/>
</dbReference>
<dbReference type="SMR" id="P67243"/>
<dbReference type="KEGG" id="mbo:BQ2027_MB2780C"/>
<dbReference type="PATRIC" id="fig|233413.5.peg.3047"/>
<dbReference type="Proteomes" id="UP000001419">
    <property type="component" value="Chromosome"/>
</dbReference>
<dbReference type="GO" id="GO:0000287">
    <property type="term" value="F:magnesium ion binding"/>
    <property type="evidence" value="ECO:0007669"/>
    <property type="project" value="UniProtKB-UniRule"/>
</dbReference>
<dbReference type="GO" id="GO:0004540">
    <property type="term" value="F:RNA nuclease activity"/>
    <property type="evidence" value="ECO:0007669"/>
    <property type="project" value="InterPro"/>
</dbReference>
<dbReference type="CDD" id="cd09871">
    <property type="entry name" value="PIN_MtVapC28-VapC30-like"/>
    <property type="match status" value="1"/>
</dbReference>
<dbReference type="Gene3D" id="3.40.50.1010">
    <property type="entry name" value="5'-nuclease"/>
    <property type="match status" value="1"/>
</dbReference>
<dbReference type="HAMAP" id="MF_00265">
    <property type="entry name" value="VapC_Nob1"/>
    <property type="match status" value="1"/>
</dbReference>
<dbReference type="InterPro" id="IPR029060">
    <property type="entry name" value="PIN-like_dom_sf"/>
</dbReference>
<dbReference type="InterPro" id="IPR002716">
    <property type="entry name" value="PIN_dom"/>
</dbReference>
<dbReference type="InterPro" id="IPR050556">
    <property type="entry name" value="Type_II_TA_system_RNase"/>
</dbReference>
<dbReference type="InterPro" id="IPR022907">
    <property type="entry name" value="VapC_family"/>
</dbReference>
<dbReference type="PANTHER" id="PTHR33653">
    <property type="entry name" value="RIBONUCLEASE VAPC2"/>
    <property type="match status" value="1"/>
</dbReference>
<dbReference type="PANTHER" id="PTHR33653:SF1">
    <property type="entry name" value="RIBONUCLEASE VAPC2"/>
    <property type="match status" value="1"/>
</dbReference>
<dbReference type="Pfam" id="PF01850">
    <property type="entry name" value="PIN"/>
    <property type="match status" value="1"/>
</dbReference>
<dbReference type="SUPFAM" id="SSF88723">
    <property type="entry name" value="PIN domain-like"/>
    <property type="match status" value="1"/>
</dbReference>
<accession>P67243</accession>
<accession>A0A1R3Y2J1</accession>
<accession>O33301</accession>
<accession>X2BLF7</accession>
<sequence>MIVDTSAIVAIVSGESGAQVLKEALERSPNSRMSAPNYVELCAIMQRRDRPEISRLVDRLLDDYGIQVEAVDADQARVAAQAYRDYGRGSGHPARLNLGDTYSYALAQVTGEPLLFRGDDFTHTDIRPACT</sequence>
<reference key="1">
    <citation type="journal article" date="2003" name="Proc. Natl. Acad. Sci. U.S.A.">
        <title>The complete genome sequence of Mycobacterium bovis.</title>
        <authorList>
            <person name="Garnier T."/>
            <person name="Eiglmeier K."/>
            <person name="Camus J.-C."/>
            <person name="Medina N."/>
            <person name="Mansoor H."/>
            <person name="Pryor M."/>
            <person name="Duthoy S."/>
            <person name="Grondin S."/>
            <person name="Lacroix C."/>
            <person name="Monsempe C."/>
            <person name="Simon S."/>
            <person name="Harris B."/>
            <person name="Atkin R."/>
            <person name="Doggett J."/>
            <person name="Mayes R."/>
            <person name="Keating L."/>
            <person name="Wheeler P.R."/>
            <person name="Parkhill J."/>
            <person name="Barrell B.G."/>
            <person name="Cole S.T."/>
            <person name="Gordon S.V."/>
            <person name="Hewinson R.G."/>
        </authorList>
    </citation>
    <scope>NUCLEOTIDE SEQUENCE [LARGE SCALE GENOMIC DNA]</scope>
    <source>
        <strain>ATCC BAA-935 / AF2122/97</strain>
    </source>
</reference>
<reference key="2">
    <citation type="journal article" date="2017" name="Genome Announc.">
        <title>Updated reference genome sequence and annotation of Mycobacterium bovis AF2122/97.</title>
        <authorList>
            <person name="Malone K.M."/>
            <person name="Farrell D."/>
            <person name="Stuber T.P."/>
            <person name="Schubert O.T."/>
            <person name="Aebersold R."/>
            <person name="Robbe-Austerman S."/>
            <person name="Gordon S.V."/>
        </authorList>
    </citation>
    <scope>NUCLEOTIDE SEQUENCE [LARGE SCALE GENOMIC DNA]</scope>
    <scope>GENOME REANNOTATION</scope>
    <source>
        <strain>ATCC BAA-935 / AF2122/97</strain>
    </source>
</reference>
<proteinExistence type="inferred from homology"/>
<name>VAPC8_MYCBO</name>
<evidence type="ECO:0000255" key="1">
    <source>
        <dbReference type="HAMAP-Rule" id="MF_00265"/>
    </source>
</evidence>
<organism>
    <name type="scientific">Mycobacterium bovis (strain ATCC BAA-935 / AF2122/97)</name>
    <dbReference type="NCBI Taxonomy" id="233413"/>
    <lineage>
        <taxon>Bacteria</taxon>
        <taxon>Bacillati</taxon>
        <taxon>Actinomycetota</taxon>
        <taxon>Actinomycetes</taxon>
        <taxon>Mycobacteriales</taxon>
        <taxon>Mycobacteriaceae</taxon>
        <taxon>Mycobacterium</taxon>
        <taxon>Mycobacterium tuberculosis complex</taxon>
    </lineage>
</organism>
<comment type="function">
    <text evidence="1">Toxic component of a type II toxin-antitoxin (TA) system. An RNase.</text>
</comment>
<comment type="cofactor">
    <cofactor evidence="1">
        <name>Mg(2+)</name>
        <dbReference type="ChEBI" id="CHEBI:18420"/>
    </cofactor>
</comment>
<comment type="similarity">
    <text evidence="1">Belongs to the PINc/VapC protein family.</text>
</comment>
<gene>
    <name type="ordered locus">BQ2027_MB2780C</name>
</gene>